<evidence type="ECO:0000255" key="1">
    <source>
        <dbReference type="HAMAP-Rule" id="MF_00412"/>
    </source>
</evidence>
<proteinExistence type="inferred from homology"/>
<feature type="chain" id="PRO_0000189686" description="Gamma-glutamyl phosphate reductase">
    <location>
        <begin position="1"/>
        <end position="414"/>
    </location>
</feature>
<protein>
    <recommendedName>
        <fullName evidence="1">Gamma-glutamyl phosphate reductase</fullName>
        <shortName evidence="1">GPR</shortName>
        <ecNumber evidence="1">1.2.1.41</ecNumber>
    </recommendedName>
    <alternativeName>
        <fullName evidence="1">Glutamate-5-semialdehyde dehydrogenase</fullName>
    </alternativeName>
    <alternativeName>
        <fullName evidence="1">Glutamyl-gamma-semialdehyde dehydrogenase</fullName>
        <shortName evidence="1">GSA dehydrogenase</shortName>
    </alternativeName>
</protein>
<reference key="1">
    <citation type="journal article" date="2003" name="Nature">
        <title>The genome sequence of Bacillus anthracis Ames and comparison to closely related bacteria.</title>
        <authorList>
            <person name="Read T.D."/>
            <person name="Peterson S.N."/>
            <person name="Tourasse N.J."/>
            <person name="Baillie L.W."/>
            <person name="Paulsen I.T."/>
            <person name="Nelson K.E."/>
            <person name="Tettelin H."/>
            <person name="Fouts D.E."/>
            <person name="Eisen J.A."/>
            <person name="Gill S.R."/>
            <person name="Holtzapple E.K."/>
            <person name="Okstad O.A."/>
            <person name="Helgason E."/>
            <person name="Rilstone J."/>
            <person name="Wu M."/>
            <person name="Kolonay J.F."/>
            <person name="Beanan M.J."/>
            <person name="Dodson R.J."/>
            <person name="Brinkac L.M."/>
            <person name="Gwinn M.L."/>
            <person name="DeBoy R.T."/>
            <person name="Madpu R."/>
            <person name="Daugherty S.C."/>
            <person name="Durkin A.S."/>
            <person name="Haft D.H."/>
            <person name="Nelson W.C."/>
            <person name="Peterson J.D."/>
            <person name="Pop M."/>
            <person name="Khouri H.M."/>
            <person name="Radune D."/>
            <person name="Benton J.L."/>
            <person name="Mahamoud Y."/>
            <person name="Jiang L."/>
            <person name="Hance I.R."/>
            <person name="Weidman J.F."/>
            <person name="Berry K.J."/>
            <person name="Plaut R.D."/>
            <person name="Wolf A.M."/>
            <person name="Watkins K.L."/>
            <person name="Nierman W.C."/>
            <person name="Hazen A."/>
            <person name="Cline R.T."/>
            <person name="Redmond C."/>
            <person name="Thwaite J.E."/>
            <person name="White O."/>
            <person name="Salzberg S.L."/>
            <person name="Thomason B."/>
            <person name="Friedlander A.M."/>
            <person name="Koehler T.M."/>
            <person name="Hanna P.C."/>
            <person name="Kolstoe A.-B."/>
            <person name="Fraser C.M."/>
        </authorList>
    </citation>
    <scope>NUCLEOTIDE SEQUENCE [LARGE SCALE GENOMIC DNA]</scope>
    <source>
        <strain>Ames / isolate Porton</strain>
    </source>
</reference>
<reference key="2">
    <citation type="journal article" date="2009" name="J. Bacteriol.">
        <title>The complete genome sequence of Bacillus anthracis Ames 'Ancestor'.</title>
        <authorList>
            <person name="Ravel J."/>
            <person name="Jiang L."/>
            <person name="Stanley S.T."/>
            <person name="Wilson M.R."/>
            <person name="Decker R.S."/>
            <person name="Read T.D."/>
            <person name="Worsham P."/>
            <person name="Keim P.S."/>
            <person name="Salzberg S.L."/>
            <person name="Fraser-Liggett C.M."/>
            <person name="Rasko D.A."/>
        </authorList>
    </citation>
    <scope>NUCLEOTIDE SEQUENCE [LARGE SCALE GENOMIC DNA]</scope>
    <source>
        <strain>Ames ancestor</strain>
    </source>
</reference>
<reference key="3">
    <citation type="submission" date="2004-01" db="EMBL/GenBank/DDBJ databases">
        <title>Complete genome sequence of Bacillus anthracis Sterne.</title>
        <authorList>
            <person name="Brettin T.S."/>
            <person name="Bruce D."/>
            <person name="Challacombe J.F."/>
            <person name="Gilna P."/>
            <person name="Han C."/>
            <person name="Hill K."/>
            <person name="Hitchcock P."/>
            <person name="Jackson P."/>
            <person name="Keim P."/>
            <person name="Longmire J."/>
            <person name="Lucas S."/>
            <person name="Okinaka R."/>
            <person name="Richardson P."/>
            <person name="Rubin E."/>
            <person name="Tice H."/>
        </authorList>
    </citation>
    <scope>NUCLEOTIDE SEQUENCE [LARGE SCALE GENOMIC DNA]</scope>
    <source>
        <strain>Sterne</strain>
    </source>
</reference>
<accession>Q81P27</accession>
<accession>Q6HX99</accession>
<accession>Q6KRC1</accession>
<keyword id="KW-0028">Amino-acid biosynthesis</keyword>
<keyword id="KW-0963">Cytoplasm</keyword>
<keyword id="KW-0521">NADP</keyword>
<keyword id="KW-0560">Oxidoreductase</keyword>
<keyword id="KW-0641">Proline biosynthesis</keyword>
<keyword id="KW-1185">Reference proteome</keyword>
<dbReference type="EC" id="1.2.1.41" evidence="1"/>
<dbReference type="EMBL" id="AE016879">
    <property type="protein sequence ID" value="AAP26811.1"/>
    <property type="molecule type" value="Genomic_DNA"/>
</dbReference>
<dbReference type="EMBL" id="AE017334">
    <property type="protein sequence ID" value="AAT32110.1"/>
    <property type="molecule type" value="Genomic_DNA"/>
</dbReference>
<dbReference type="EMBL" id="AE017225">
    <property type="protein sequence ID" value="AAT55090.1"/>
    <property type="molecule type" value="Genomic_DNA"/>
</dbReference>
<dbReference type="RefSeq" id="NP_845325.1">
    <property type="nucleotide sequence ID" value="NC_003997.3"/>
</dbReference>
<dbReference type="RefSeq" id="WP_001006638.1">
    <property type="nucleotide sequence ID" value="NZ_WXXJ01000029.1"/>
</dbReference>
<dbReference type="RefSeq" id="YP_029039.1">
    <property type="nucleotide sequence ID" value="NC_005945.1"/>
</dbReference>
<dbReference type="SMR" id="Q81P27"/>
<dbReference type="IntAct" id="Q81P27">
    <property type="interactions" value="10"/>
</dbReference>
<dbReference type="STRING" id="261594.GBAA_2992"/>
<dbReference type="DNASU" id="1088121"/>
<dbReference type="GeneID" id="45022805"/>
<dbReference type="KEGG" id="ban:BA_2992"/>
<dbReference type="KEGG" id="bar:GBAA_2992"/>
<dbReference type="KEGG" id="bat:BAS2781"/>
<dbReference type="PATRIC" id="fig|198094.11.peg.2973"/>
<dbReference type="eggNOG" id="COG0014">
    <property type="taxonomic scope" value="Bacteria"/>
</dbReference>
<dbReference type="HOGENOM" id="CLU_030231_0_0_9"/>
<dbReference type="OMA" id="KTQRYGT"/>
<dbReference type="OrthoDB" id="9809970at2"/>
<dbReference type="UniPathway" id="UPA00098">
    <property type="reaction ID" value="UER00360"/>
</dbReference>
<dbReference type="Proteomes" id="UP000000427">
    <property type="component" value="Chromosome"/>
</dbReference>
<dbReference type="Proteomes" id="UP000000594">
    <property type="component" value="Chromosome"/>
</dbReference>
<dbReference type="GO" id="GO:0005737">
    <property type="term" value="C:cytoplasm"/>
    <property type="evidence" value="ECO:0007669"/>
    <property type="project" value="UniProtKB-SubCell"/>
</dbReference>
<dbReference type="GO" id="GO:0004350">
    <property type="term" value="F:glutamate-5-semialdehyde dehydrogenase activity"/>
    <property type="evidence" value="ECO:0007669"/>
    <property type="project" value="UniProtKB-UniRule"/>
</dbReference>
<dbReference type="GO" id="GO:0050661">
    <property type="term" value="F:NADP binding"/>
    <property type="evidence" value="ECO:0007669"/>
    <property type="project" value="InterPro"/>
</dbReference>
<dbReference type="GO" id="GO:0055129">
    <property type="term" value="P:L-proline biosynthetic process"/>
    <property type="evidence" value="ECO:0007669"/>
    <property type="project" value="UniProtKB-UniRule"/>
</dbReference>
<dbReference type="CDD" id="cd07079">
    <property type="entry name" value="ALDH_F18-19_ProA-GPR"/>
    <property type="match status" value="1"/>
</dbReference>
<dbReference type="FunFam" id="3.40.309.10:FF:000006">
    <property type="entry name" value="Gamma-glutamyl phosphate reductase"/>
    <property type="match status" value="1"/>
</dbReference>
<dbReference type="Gene3D" id="3.40.605.10">
    <property type="entry name" value="Aldehyde Dehydrogenase, Chain A, domain 1"/>
    <property type="match status" value="1"/>
</dbReference>
<dbReference type="Gene3D" id="3.40.309.10">
    <property type="entry name" value="Aldehyde Dehydrogenase, Chain A, domain 2"/>
    <property type="match status" value="1"/>
</dbReference>
<dbReference type="HAMAP" id="MF_00412">
    <property type="entry name" value="ProA"/>
    <property type="match status" value="1"/>
</dbReference>
<dbReference type="InterPro" id="IPR016161">
    <property type="entry name" value="Ald_DH/histidinol_DH"/>
</dbReference>
<dbReference type="InterPro" id="IPR016163">
    <property type="entry name" value="Ald_DH_C"/>
</dbReference>
<dbReference type="InterPro" id="IPR016162">
    <property type="entry name" value="Ald_DH_N"/>
</dbReference>
<dbReference type="InterPro" id="IPR015590">
    <property type="entry name" value="Aldehyde_DH_dom"/>
</dbReference>
<dbReference type="InterPro" id="IPR020593">
    <property type="entry name" value="G-glutamylP_reductase_CS"/>
</dbReference>
<dbReference type="InterPro" id="IPR012134">
    <property type="entry name" value="Glu-5-SA_DH"/>
</dbReference>
<dbReference type="InterPro" id="IPR000965">
    <property type="entry name" value="GPR_dom"/>
</dbReference>
<dbReference type="NCBIfam" id="NF001221">
    <property type="entry name" value="PRK00197.1"/>
    <property type="match status" value="1"/>
</dbReference>
<dbReference type="NCBIfam" id="TIGR00407">
    <property type="entry name" value="proA"/>
    <property type="match status" value="1"/>
</dbReference>
<dbReference type="PANTHER" id="PTHR11063:SF8">
    <property type="entry name" value="DELTA-1-PYRROLINE-5-CARBOXYLATE SYNTHASE"/>
    <property type="match status" value="1"/>
</dbReference>
<dbReference type="PANTHER" id="PTHR11063">
    <property type="entry name" value="GLUTAMATE SEMIALDEHYDE DEHYDROGENASE"/>
    <property type="match status" value="1"/>
</dbReference>
<dbReference type="Pfam" id="PF00171">
    <property type="entry name" value="Aldedh"/>
    <property type="match status" value="1"/>
</dbReference>
<dbReference type="PIRSF" id="PIRSF000151">
    <property type="entry name" value="GPR"/>
    <property type="match status" value="1"/>
</dbReference>
<dbReference type="SUPFAM" id="SSF53720">
    <property type="entry name" value="ALDH-like"/>
    <property type="match status" value="1"/>
</dbReference>
<dbReference type="PROSITE" id="PS01223">
    <property type="entry name" value="PROA"/>
    <property type="match status" value="1"/>
</dbReference>
<gene>
    <name evidence="1" type="primary">proA</name>
    <name type="ordered locus">BA_2992</name>
    <name type="ordered locus">GBAA_2992</name>
    <name type="ordered locus">BAS2781</name>
</gene>
<comment type="function">
    <text evidence="1">Catalyzes the NADPH-dependent reduction of L-glutamate 5-phosphate into L-glutamate 5-semialdehyde and phosphate. The product spontaneously undergoes cyclization to form 1-pyrroline-5-carboxylate.</text>
</comment>
<comment type="catalytic activity">
    <reaction evidence="1">
        <text>L-glutamate 5-semialdehyde + phosphate + NADP(+) = L-glutamyl 5-phosphate + NADPH + H(+)</text>
        <dbReference type="Rhea" id="RHEA:19541"/>
        <dbReference type="ChEBI" id="CHEBI:15378"/>
        <dbReference type="ChEBI" id="CHEBI:43474"/>
        <dbReference type="ChEBI" id="CHEBI:57783"/>
        <dbReference type="ChEBI" id="CHEBI:58066"/>
        <dbReference type="ChEBI" id="CHEBI:58274"/>
        <dbReference type="ChEBI" id="CHEBI:58349"/>
        <dbReference type="EC" id="1.2.1.41"/>
    </reaction>
</comment>
<comment type="pathway">
    <text evidence="1">Amino-acid biosynthesis; L-proline biosynthesis; L-glutamate 5-semialdehyde from L-glutamate: step 2/2.</text>
</comment>
<comment type="subcellular location">
    <subcellularLocation>
        <location evidence="1">Cytoplasm</location>
    </subcellularLocation>
</comment>
<comment type="similarity">
    <text evidence="1">Belongs to the gamma-glutamyl phosphate reductase family.</text>
</comment>
<sequence length="414" mass="45436">MNEVLAKGKKAKEIARELVLKSTEQKNEALSAIADQLILETAYILEENKKDIEEGKAKGFSDSLLDRLMLNEQRIVDMTEGIKQLIELRDPVGECVSAWERPNGLSIQEMRVPLGVVGMIYEARPNVTVDAATICLKTGNAVILRGSSSAIHSNKAIVAVIHRALKQTSLPQESVQLIEDTTRDSAKQLFTMNDYLDVLIPRGGKQLIDTVVREASVPVLETGAGNCHVFIDETADKQMAFDIINAKTQRPSVCNAIETIVLHEKWAEQYGSELFSSLKKRGVELRGDQKALAMDSTIVLASEEDWGTEFLSLTPAVKLVSSIEEAIHHINTYGSMHSEAIISENEEKVSKFFVSVDAAALYHNASTRFTDGSEFGSGAEIGISTQKLHVRGPMGLPALTSTKYVIRGNGQIRK</sequence>
<organism>
    <name type="scientific">Bacillus anthracis</name>
    <dbReference type="NCBI Taxonomy" id="1392"/>
    <lineage>
        <taxon>Bacteria</taxon>
        <taxon>Bacillati</taxon>
        <taxon>Bacillota</taxon>
        <taxon>Bacilli</taxon>
        <taxon>Bacillales</taxon>
        <taxon>Bacillaceae</taxon>
        <taxon>Bacillus</taxon>
        <taxon>Bacillus cereus group</taxon>
    </lineage>
</organism>
<name>PROA_BACAN</name>